<protein>
    <recommendedName>
        <fullName>Glycosyl-4,4'-diaponeurosporenoate acyltransferase</fullName>
        <ecNumber>2.3.1.-</ecNumber>
    </recommendedName>
</protein>
<feature type="signal peptide" evidence="2">
    <location>
        <begin position="1"/>
        <end position="28"/>
    </location>
</feature>
<feature type="chain" id="PRO_0000284853" description="Glycosyl-4,4'-diaponeurosporenoate acyltransferase">
    <location>
        <begin position="29"/>
        <end position="165"/>
    </location>
</feature>
<feature type="transmembrane region" description="Helical" evidence="2">
    <location>
        <begin position="126"/>
        <end position="145"/>
    </location>
</feature>
<name>CRTO_STAAN</name>
<reference key="1">
    <citation type="journal article" date="2001" name="Lancet">
        <title>Whole genome sequencing of meticillin-resistant Staphylococcus aureus.</title>
        <authorList>
            <person name="Kuroda M."/>
            <person name="Ohta T."/>
            <person name="Uchiyama I."/>
            <person name="Baba T."/>
            <person name="Yuzawa H."/>
            <person name="Kobayashi I."/>
            <person name="Cui L."/>
            <person name="Oguchi A."/>
            <person name="Aoki K."/>
            <person name="Nagai Y."/>
            <person name="Lian J.-Q."/>
            <person name="Ito T."/>
            <person name="Kanamori M."/>
            <person name="Matsumaru H."/>
            <person name="Maruyama A."/>
            <person name="Murakami H."/>
            <person name="Hosoyama A."/>
            <person name="Mizutani-Ui Y."/>
            <person name="Takahashi N.K."/>
            <person name="Sawano T."/>
            <person name="Inoue R."/>
            <person name="Kaito C."/>
            <person name="Sekimizu K."/>
            <person name="Hirakawa H."/>
            <person name="Kuhara S."/>
            <person name="Goto S."/>
            <person name="Yabuzaki J."/>
            <person name="Kanehisa M."/>
            <person name="Yamashita A."/>
            <person name="Oshima K."/>
            <person name="Furuya K."/>
            <person name="Yoshino C."/>
            <person name="Shiba T."/>
            <person name="Hattori M."/>
            <person name="Ogasawara N."/>
            <person name="Hayashi H."/>
            <person name="Hiramatsu K."/>
        </authorList>
    </citation>
    <scope>NUCLEOTIDE SEQUENCE [LARGE SCALE GENOMIC DNA]</scope>
    <source>
        <strain>N315</strain>
    </source>
</reference>
<evidence type="ECO:0000250" key="1"/>
<evidence type="ECO:0000255" key="2"/>
<evidence type="ECO:0000305" key="3"/>
<comment type="function">
    <text evidence="1">Catalyzes the acylation of glycosyl-4,4'-diaponeurosporenoate, i.e. the esterification of glucose at the C6'' position with the carboxyl group of the C(15) fatty acid 12-methyltetradecanoic acid, to yield staphyloxanthin. This is the last step in the biosynthesis of this orange pigment, present in most staphylococci strains (By similarity).</text>
</comment>
<comment type="pathway">
    <text>Carotenoid biosynthesis; staphyloxanthin biosynthesis; staphyloxanthin from farnesyl diphosphate: step 5/5.</text>
</comment>
<comment type="subcellular location">
    <subcellularLocation>
        <location evidence="3">Cell membrane</location>
        <topology evidence="3">Single-pass membrane protein</topology>
    </subcellularLocation>
</comment>
<comment type="similarity">
    <text evidence="3">Belongs to the acyltransferase CrtO family.</text>
</comment>
<sequence length="165" mass="20309">MKTMKKYIKTAFFCSMYWLIVQLNIANLGTRIPDKYFRQKYIIFKSFNFEKHGKFWNKWFYVRKWKHKILDGHQLNQNIYDQRHLMTINTDEIEKMIIETKRAELIHWISILPVIIFNKGSRLVKYINIFYAMIANVPIIIVQRYNRPRLTQLLRILKRRGERHD</sequence>
<organism>
    <name type="scientific">Staphylococcus aureus (strain N315)</name>
    <dbReference type="NCBI Taxonomy" id="158879"/>
    <lineage>
        <taxon>Bacteria</taxon>
        <taxon>Bacillati</taxon>
        <taxon>Bacillota</taxon>
        <taxon>Bacilli</taxon>
        <taxon>Bacillales</taxon>
        <taxon>Staphylococcaceae</taxon>
        <taxon>Staphylococcus</taxon>
    </lineage>
</organism>
<keyword id="KW-0012">Acyltransferase</keyword>
<keyword id="KW-0125">Carotenoid biosynthesis</keyword>
<keyword id="KW-1003">Cell membrane</keyword>
<keyword id="KW-0472">Membrane</keyword>
<keyword id="KW-0732">Signal</keyword>
<keyword id="KW-0808">Transferase</keyword>
<keyword id="KW-0812">Transmembrane</keyword>
<keyword id="KW-1133">Transmembrane helix</keyword>
<accession>Q7A3D8</accession>
<dbReference type="EC" id="2.3.1.-"/>
<dbReference type="EMBL" id="BA000018">
    <property type="protein sequence ID" value="BAB43656.1"/>
    <property type="molecule type" value="Genomic_DNA"/>
</dbReference>
<dbReference type="PIR" id="F90061">
    <property type="entry name" value="F90061"/>
</dbReference>
<dbReference type="EnsemblBacteria" id="BAB43656">
    <property type="protein sequence ID" value="BAB43656"/>
    <property type="gene ID" value="BAB43656"/>
</dbReference>
<dbReference type="KEGG" id="sau:SA2352"/>
<dbReference type="HOGENOM" id="CLU_133300_0_0_9"/>
<dbReference type="UniPathway" id="UPA00029">
    <property type="reaction ID" value="UER00560"/>
</dbReference>
<dbReference type="GO" id="GO:0005886">
    <property type="term" value="C:plasma membrane"/>
    <property type="evidence" value="ECO:0007669"/>
    <property type="project" value="UniProtKB-SubCell"/>
</dbReference>
<dbReference type="GO" id="GO:0016746">
    <property type="term" value="F:acyltransferase activity"/>
    <property type="evidence" value="ECO:0007669"/>
    <property type="project" value="UniProtKB-KW"/>
</dbReference>
<dbReference type="GO" id="GO:0016117">
    <property type="term" value="P:carotenoid biosynthetic process"/>
    <property type="evidence" value="ECO:0007669"/>
    <property type="project" value="UniProtKB-KW"/>
</dbReference>
<dbReference type="InterPro" id="IPR044021">
    <property type="entry name" value="CrtO"/>
</dbReference>
<dbReference type="Pfam" id="PF18927">
    <property type="entry name" value="CrtO"/>
    <property type="match status" value="1"/>
</dbReference>
<gene>
    <name type="primary">crtO</name>
    <name type="ordered locus">SA2352</name>
</gene>
<proteinExistence type="inferred from homology"/>